<accession>P25745</accession>
<accession>P75964</accession>
<dbReference type="EC" id="2.8.1.13" evidence="1 2"/>
<dbReference type="EMBL" id="U00096">
    <property type="protein sequence ID" value="AAC74217.2"/>
    <property type="molecule type" value="Genomic_DNA"/>
</dbReference>
<dbReference type="EMBL" id="AP009048">
    <property type="protein sequence ID" value="BAA35955.1"/>
    <property type="molecule type" value="Genomic_DNA"/>
</dbReference>
<dbReference type="EMBL" id="X59307">
    <property type="protein sequence ID" value="CAA41994.1"/>
    <property type="status" value="ALT_FRAME"/>
    <property type="molecule type" value="Genomic_DNA"/>
</dbReference>
<dbReference type="EMBL" id="M74924">
    <property type="status" value="NOT_ANNOTATED_CDS"/>
    <property type="molecule type" value="Genomic_DNA"/>
</dbReference>
<dbReference type="PIR" id="B64858">
    <property type="entry name" value="B64858"/>
</dbReference>
<dbReference type="RefSeq" id="NP_415651.4">
    <property type="nucleotide sequence ID" value="NC_000913.3"/>
</dbReference>
<dbReference type="RefSeq" id="WP_001297484.1">
    <property type="nucleotide sequence ID" value="NZ_STEB01000016.1"/>
</dbReference>
<dbReference type="PDB" id="2DER">
    <property type="method" value="X-ray"/>
    <property type="resolution" value="3.10 A"/>
    <property type="chains" value="A/B=1-368"/>
</dbReference>
<dbReference type="PDB" id="2DET">
    <property type="method" value="X-ray"/>
    <property type="resolution" value="3.40 A"/>
    <property type="chains" value="A=1-368"/>
</dbReference>
<dbReference type="PDB" id="2DEU">
    <property type="method" value="X-ray"/>
    <property type="resolution" value="3.40 A"/>
    <property type="chains" value="A/B=1-368"/>
</dbReference>
<dbReference type="PDBsum" id="2DER"/>
<dbReference type="PDBsum" id="2DET"/>
<dbReference type="PDBsum" id="2DEU"/>
<dbReference type="SMR" id="P25745"/>
<dbReference type="BioGRID" id="4263129">
    <property type="interactions" value="72"/>
</dbReference>
<dbReference type="BioGRID" id="850062">
    <property type="interactions" value="1"/>
</dbReference>
<dbReference type="ComplexPortal" id="CPX-2145">
    <property type="entry name" value="tRNA-specific 2-thiouridylase tusE-mnmA complex"/>
</dbReference>
<dbReference type="DIP" id="DIP-11035N"/>
<dbReference type="FunCoup" id="P25745">
    <property type="interactions" value="851"/>
</dbReference>
<dbReference type="IntAct" id="P25745">
    <property type="interactions" value="8"/>
</dbReference>
<dbReference type="STRING" id="511145.b1133"/>
<dbReference type="jPOST" id="P25745"/>
<dbReference type="PaxDb" id="511145-b1133"/>
<dbReference type="EnsemblBacteria" id="AAC74217">
    <property type="protein sequence ID" value="AAC74217"/>
    <property type="gene ID" value="b1133"/>
</dbReference>
<dbReference type="GeneID" id="75203719"/>
<dbReference type="GeneID" id="945690"/>
<dbReference type="KEGG" id="ecj:JW1119"/>
<dbReference type="KEGG" id="eco:b1133"/>
<dbReference type="KEGG" id="ecoc:C3026_06815"/>
<dbReference type="PATRIC" id="fig|1411691.4.peg.1133"/>
<dbReference type="EchoBASE" id="EB1320"/>
<dbReference type="eggNOG" id="COG0482">
    <property type="taxonomic scope" value="Bacteria"/>
</dbReference>
<dbReference type="HOGENOM" id="CLU_035188_1_0_6"/>
<dbReference type="InParanoid" id="P25745"/>
<dbReference type="OMA" id="PFYVWDL"/>
<dbReference type="OrthoDB" id="9800696at2"/>
<dbReference type="PhylomeDB" id="P25745"/>
<dbReference type="BioCyc" id="EcoCyc:EG11344-MONOMER"/>
<dbReference type="BioCyc" id="MetaCyc:EG11344-MONOMER"/>
<dbReference type="BRENDA" id="2.8.1.13">
    <property type="organism ID" value="2026"/>
</dbReference>
<dbReference type="BRENDA" id="2.8.1.4">
    <property type="organism ID" value="2026"/>
</dbReference>
<dbReference type="BRENDA" id="2.8.1.7">
    <property type="organism ID" value="2026"/>
</dbReference>
<dbReference type="EvolutionaryTrace" id="P25745"/>
<dbReference type="PRO" id="PR:P25745"/>
<dbReference type="Proteomes" id="UP000000625">
    <property type="component" value="Chromosome"/>
</dbReference>
<dbReference type="GO" id="GO:0005829">
    <property type="term" value="C:cytosol"/>
    <property type="evidence" value="ECO:0000314"/>
    <property type="project" value="EcoCyc"/>
</dbReference>
<dbReference type="GO" id="GO:1990228">
    <property type="term" value="C:sulfurtransferase complex"/>
    <property type="evidence" value="ECO:0000353"/>
    <property type="project" value="ComplexPortal"/>
</dbReference>
<dbReference type="GO" id="GO:0005524">
    <property type="term" value="F:ATP binding"/>
    <property type="evidence" value="ECO:0007669"/>
    <property type="project" value="UniProtKB-KW"/>
</dbReference>
<dbReference type="GO" id="GO:0016783">
    <property type="term" value="F:sulfurtransferase activity"/>
    <property type="evidence" value="ECO:0000314"/>
    <property type="project" value="EcoCyc"/>
</dbReference>
<dbReference type="GO" id="GO:0000049">
    <property type="term" value="F:tRNA binding"/>
    <property type="evidence" value="ECO:0007669"/>
    <property type="project" value="UniProtKB-KW"/>
</dbReference>
<dbReference type="GO" id="GO:0103016">
    <property type="term" value="F:tRNA-uridine 2-sulfurtransferase activity"/>
    <property type="evidence" value="ECO:0007669"/>
    <property type="project" value="UniProtKB-EC"/>
</dbReference>
<dbReference type="GO" id="GO:0002143">
    <property type="term" value="P:tRNA wobble position uridine thiolation"/>
    <property type="evidence" value="ECO:0000314"/>
    <property type="project" value="EcoCyc"/>
</dbReference>
<dbReference type="CDD" id="cd01998">
    <property type="entry name" value="MnmA_TRMU-like"/>
    <property type="match status" value="1"/>
</dbReference>
<dbReference type="FunFam" id="2.30.30.280:FF:000001">
    <property type="entry name" value="tRNA-specific 2-thiouridylase MnmA"/>
    <property type="match status" value="1"/>
</dbReference>
<dbReference type="FunFam" id="2.40.30.10:FF:000023">
    <property type="entry name" value="tRNA-specific 2-thiouridylase MnmA"/>
    <property type="match status" value="1"/>
</dbReference>
<dbReference type="FunFam" id="3.40.50.620:FF:000004">
    <property type="entry name" value="tRNA-specific 2-thiouridylase MnmA"/>
    <property type="match status" value="1"/>
</dbReference>
<dbReference type="Gene3D" id="2.30.30.280">
    <property type="entry name" value="Adenine nucleotide alpha hydrolases-like domains"/>
    <property type="match status" value="1"/>
</dbReference>
<dbReference type="Gene3D" id="3.40.50.620">
    <property type="entry name" value="HUPs"/>
    <property type="match status" value="1"/>
</dbReference>
<dbReference type="Gene3D" id="2.40.30.10">
    <property type="entry name" value="Translation factors"/>
    <property type="match status" value="1"/>
</dbReference>
<dbReference type="HAMAP" id="MF_00144">
    <property type="entry name" value="tRNA_thiouridyl_MnmA"/>
    <property type="match status" value="1"/>
</dbReference>
<dbReference type="InterPro" id="IPR004506">
    <property type="entry name" value="MnmA-like"/>
</dbReference>
<dbReference type="InterPro" id="IPR046885">
    <property type="entry name" value="MnmA-like_C"/>
</dbReference>
<dbReference type="InterPro" id="IPR046884">
    <property type="entry name" value="MnmA-like_central"/>
</dbReference>
<dbReference type="InterPro" id="IPR023382">
    <property type="entry name" value="MnmA-like_central_sf"/>
</dbReference>
<dbReference type="InterPro" id="IPR014729">
    <property type="entry name" value="Rossmann-like_a/b/a_fold"/>
</dbReference>
<dbReference type="NCBIfam" id="NF001138">
    <property type="entry name" value="PRK00143.1"/>
    <property type="match status" value="1"/>
</dbReference>
<dbReference type="NCBIfam" id="TIGR00420">
    <property type="entry name" value="trmU"/>
    <property type="match status" value="1"/>
</dbReference>
<dbReference type="PANTHER" id="PTHR11933:SF5">
    <property type="entry name" value="MITOCHONDRIAL TRNA-SPECIFIC 2-THIOURIDYLASE 1"/>
    <property type="match status" value="1"/>
</dbReference>
<dbReference type="PANTHER" id="PTHR11933">
    <property type="entry name" value="TRNA 5-METHYLAMINOMETHYL-2-THIOURIDYLATE -METHYLTRANSFERASE"/>
    <property type="match status" value="1"/>
</dbReference>
<dbReference type="Pfam" id="PF03054">
    <property type="entry name" value="tRNA_Me_trans"/>
    <property type="match status" value="1"/>
</dbReference>
<dbReference type="Pfam" id="PF20258">
    <property type="entry name" value="tRNA_Me_trans_C"/>
    <property type="match status" value="1"/>
</dbReference>
<dbReference type="Pfam" id="PF20259">
    <property type="entry name" value="tRNA_Me_trans_M"/>
    <property type="match status" value="1"/>
</dbReference>
<dbReference type="SUPFAM" id="SSF52402">
    <property type="entry name" value="Adenine nucleotide alpha hydrolases-like"/>
    <property type="match status" value="1"/>
</dbReference>
<feature type="chain" id="PRO_0000121588" description="tRNA-specific 2-thiouridylase MnmA">
    <location>
        <begin position="1"/>
        <end position="368"/>
    </location>
</feature>
<feature type="region of interest" description="Interaction with target base in tRNA">
    <location>
        <begin position="97"/>
        <end position="99"/>
    </location>
</feature>
<feature type="region of interest" description="Interaction with tRNA">
    <location>
        <begin position="149"/>
        <end position="151"/>
    </location>
</feature>
<feature type="region of interest" description="Interaction with tRNA">
    <location>
        <begin position="243"/>
        <end position="252"/>
    </location>
</feature>
<feature type="region of interest" description="Interaction with tRNA">
    <location>
        <begin position="311"/>
        <end position="312"/>
    </location>
</feature>
<feature type="active site" description="Nucleophile" evidence="3">
    <location>
        <position position="102"/>
    </location>
</feature>
<feature type="active site" description="Cysteine persulfide intermediate" evidence="3">
    <location>
        <position position="199"/>
    </location>
</feature>
<feature type="binding site">
    <location>
        <begin position="11"/>
        <end position="18"/>
    </location>
    <ligand>
        <name>ATP</name>
        <dbReference type="ChEBI" id="CHEBI:30616"/>
    </ligand>
</feature>
<feature type="binding site">
    <location>
        <position position="37"/>
    </location>
    <ligand>
        <name>ATP</name>
        <dbReference type="ChEBI" id="CHEBI:30616"/>
    </ligand>
</feature>
<feature type="binding site">
    <location>
        <position position="127"/>
    </location>
    <ligand>
        <name>ATP</name>
        <dbReference type="ChEBI" id="CHEBI:30616"/>
    </ligand>
</feature>
<feature type="site" description="Interaction with tRNA">
    <location>
        <position position="128"/>
    </location>
</feature>
<feature type="site" description="Interaction with tRNA">
    <location>
        <position position="344"/>
    </location>
</feature>
<feature type="disulfide bond" description="Alternate" evidence="3">
    <location>
        <begin position="102"/>
        <end position="199"/>
    </location>
</feature>
<feature type="mutagenesis site" description="Loss of activity." evidence="3">
    <original>D</original>
    <variation>A</variation>
    <location>
        <position position="17"/>
    </location>
</feature>
<feature type="mutagenesis site" description="Reduces activity by 60%." evidence="3">
    <original>M</original>
    <variation>A</variation>
    <location>
        <position position="37"/>
    </location>
</feature>
<feature type="mutagenesis site" description="Loss of activity." evidence="3">
    <original>N</original>
    <variation>A</variation>
    <location>
        <position position="97"/>
    </location>
</feature>
<feature type="mutagenesis site" description="Loss of activity." evidence="3">
    <original>D</original>
    <variation>A</variation>
    <location>
        <position position="99"/>
    </location>
</feature>
<feature type="mutagenesis site" description="Loss of activity." evidence="3">
    <original>C</original>
    <variation>A</variation>
    <location>
        <position position="102"/>
    </location>
</feature>
<feature type="mutagenesis site" description="Reduces activity by 75%." evidence="3">
    <original>K</original>
    <variation>M</variation>
    <location>
        <position position="107"/>
    </location>
</feature>
<feature type="mutagenesis site" description="Reduces activity by 90%." evidence="3">
    <original>H</original>
    <variation>A</variation>
    <location>
        <position position="128"/>
    </location>
</feature>
<feature type="mutagenesis site" description="Loss of activity." evidence="3">
    <original>K</original>
    <variation>A</variation>
    <location>
        <position position="149"/>
    </location>
</feature>
<feature type="mutagenesis site" description="Loss of activity." evidence="3">
    <original>Q</original>
    <variation>E</variation>
    <location>
        <position position="151"/>
    </location>
</feature>
<feature type="mutagenesis site" description="Abolishes the incorporation of sulfur from the sulfur-relay system; loss of activity." evidence="3">
    <original>C</original>
    <variation>A</variation>
    <location>
        <position position="199"/>
    </location>
</feature>
<feature type="mutagenesis site" description="Reduces activity by 60%." evidence="3">
    <original>F</original>
    <variation>A</variation>
    <location>
        <position position="200"/>
    </location>
</feature>
<feature type="mutagenesis site" description="Reduces activity by 50%." evidence="3">
    <original>T</original>
    <variation>A</variation>
    <location>
        <position position="239"/>
    </location>
</feature>
<feature type="mutagenesis site" description="Reduces activity by 75%." evidence="3">
    <original>R</original>
    <variation>A</variation>
    <location>
        <position position="311"/>
    </location>
</feature>
<feature type="mutagenesis site" description="Loss of activity." evidence="3">
    <original>Q</original>
    <variation>A</variation>
    <location>
        <position position="344"/>
    </location>
</feature>
<feature type="strand" evidence="5">
    <location>
        <begin position="7"/>
        <end position="11"/>
    </location>
</feature>
<feature type="helix" evidence="5">
    <location>
        <begin position="19"/>
        <end position="26"/>
    </location>
</feature>
<feature type="strand" evidence="5">
    <location>
        <begin position="31"/>
        <end position="38"/>
    </location>
</feature>
<feature type="helix" evidence="5">
    <location>
        <begin position="45"/>
        <end position="65"/>
    </location>
</feature>
<feature type="strand" evidence="5">
    <location>
        <begin position="69"/>
        <end position="73"/>
    </location>
</feature>
<feature type="helix" evidence="5">
    <location>
        <begin position="75"/>
        <end position="81"/>
    </location>
</feature>
<feature type="helix" evidence="5">
    <location>
        <begin position="83"/>
        <end position="91"/>
    </location>
</feature>
<feature type="helix" evidence="5">
    <location>
        <begin position="98"/>
        <end position="105"/>
    </location>
</feature>
<feature type="turn" evidence="5">
    <location>
        <begin position="106"/>
        <end position="109"/>
    </location>
</feature>
<feature type="helix" evidence="5">
    <location>
        <begin position="110"/>
        <end position="117"/>
    </location>
</feature>
<feature type="strand" evidence="5">
    <location>
        <begin position="122"/>
        <end position="125"/>
    </location>
</feature>
<feature type="strand" evidence="5">
    <location>
        <begin position="131"/>
        <end position="135"/>
    </location>
</feature>
<feature type="strand" evidence="5">
    <location>
        <begin position="138"/>
        <end position="142"/>
    </location>
</feature>
<feature type="turn" evidence="5">
    <location>
        <begin position="147"/>
        <end position="149"/>
    </location>
</feature>
<feature type="helix" evidence="5">
    <location>
        <begin position="152"/>
        <end position="155"/>
    </location>
</feature>
<feature type="helix" evidence="5">
    <location>
        <begin position="160"/>
        <end position="165"/>
    </location>
</feature>
<feature type="helix" evidence="5">
    <location>
        <begin position="170"/>
        <end position="172"/>
    </location>
</feature>
<feature type="helix" evidence="5">
    <location>
        <begin position="175"/>
        <end position="184"/>
    </location>
</feature>
<feature type="helix" evidence="5">
    <location>
        <begin position="198"/>
        <end position="204"/>
    </location>
</feature>
<feature type="helix" evidence="5">
    <location>
        <begin position="206"/>
        <end position="211"/>
    </location>
</feature>
<feature type="strand" evidence="5">
    <location>
        <begin position="220"/>
        <end position="223"/>
    </location>
</feature>
<feature type="strand" evidence="6">
    <location>
        <begin position="224"/>
        <end position="226"/>
    </location>
</feature>
<feature type="strand" evidence="5">
    <location>
        <begin position="228"/>
        <end position="231"/>
    </location>
</feature>
<feature type="strand" evidence="5">
    <location>
        <begin position="252"/>
        <end position="254"/>
    </location>
</feature>
<feature type="strand" evidence="5">
    <location>
        <begin position="259"/>
        <end position="265"/>
    </location>
</feature>
<feature type="turn" evidence="5">
    <location>
        <begin position="266"/>
        <end position="269"/>
    </location>
</feature>
<feature type="strand" evidence="5">
    <location>
        <begin position="270"/>
        <end position="276"/>
    </location>
</feature>
<feature type="turn" evidence="5">
    <location>
        <begin position="280"/>
        <end position="282"/>
    </location>
</feature>
<feature type="strand" evidence="5">
    <location>
        <begin position="284"/>
        <end position="294"/>
    </location>
</feature>
<feature type="strand" evidence="5">
    <location>
        <begin position="302"/>
        <end position="311"/>
    </location>
</feature>
<feature type="strand" evidence="5">
    <location>
        <begin position="317"/>
        <end position="322"/>
    </location>
</feature>
<feature type="strand" evidence="5">
    <location>
        <begin position="325"/>
        <end position="327"/>
    </location>
</feature>
<feature type="strand" evidence="5">
    <location>
        <begin position="329"/>
        <end position="338"/>
    </location>
</feature>
<feature type="strand" evidence="5">
    <location>
        <begin position="344"/>
        <end position="350"/>
    </location>
</feature>
<feature type="strand" evidence="5">
    <location>
        <begin position="353"/>
        <end position="365"/>
    </location>
</feature>
<gene>
    <name type="primary">mnmA</name>
    <name type="synonym">asuE</name>
    <name type="synonym">trmU</name>
    <name type="synonym">ycfB</name>
    <name type="ordered locus">b1133</name>
    <name type="ordered locus">JW1119</name>
</gene>
<reference key="1">
    <citation type="journal article" date="1996" name="DNA Res.">
        <title>A 718-kb DNA sequence of the Escherichia coli K-12 genome corresponding to the 12.7-28.0 min region on the linkage map.</title>
        <authorList>
            <person name="Oshima T."/>
            <person name="Aiba H."/>
            <person name="Baba T."/>
            <person name="Fujita K."/>
            <person name="Hayashi K."/>
            <person name="Honjo A."/>
            <person name="Ikemoto K."/>
            <person name="Inada T."/>
            <person name="Itoh T."/>
            <person name="Kajihara M."/>
            <person name="Kanai K."/>
            <person name="Kashimoto K."/>
            <person name="Kimura S."/>
            <person name="Kitagawa M."/>
            <person name="Makino K."/>
            <person name="Masuda S."/>
            <person name="Miki T."/>
            <person name="Mizobuchi K."/>
            <person name="Mori H."/>
            <person name="Motomura K."/>
            <person name="Nakamura Y."/>
            <person name="Nashimoto H."/>
            <person name="Nishio Y."/>
            <person name="Saito N."/>
            <person name="Sampei G."/>
            <person name="Seki Y."/>
            <person name="Tagami H."/>
            <person name="Takemoto K."/>
            <person name="Wada C."/>
            <person name="Yamamoto Y."/>
            <person name="Yano M."/>
            <person name="Horiuchi T."/>
        </authorList>
    </citation>
    <scope>NUCLEOTIDE SEQUENCE [LARGE SCALE GENOMIC DNA]</scope>
    <source>
        <strain>K12 / W3110 / ATCC 27325 / DSM 5911</strain>
    </source>
</reference>
<reference key="2">
    <citation type="journal article" date="1997" name="Science">
        <title>The complete genome sequence of Escherichia coli K-12.</title>
        <authorList>
            <person name="Blattner F.R."/>
            <person name="Plunkett G. III"/>
            <person name="Bloch C.A."/>
            <person name="Perna N.T."/>
            <person name="Burland V."/>
            <person name="Riley M."/>
            <person name="Collado-Vides J."/>
            <person name="Glasner J.D."/>
            <person name="Rode C.K."/>
            <person name="Mayhew G.F."/>
            <person name="Gregor J."/>
            <person name="Davis N.W."/>
            <person name="Kirkpatrick H.A."/>
            <person name="Goeden M.A."/>
            <person name="Rose D.J."/>
            <person name="Mau B."/>
            <person name="Shao Y."/>
        </authorList>
    </citation>
    <scope>NUCLEOTIDE SEQUENCE [LARGE SCALE GENOMIC DNA]</scope>
    <source>
        <strain>K12 / MG1655 / ATCC 47076</strain>
    </source>
</reference>
<reference key="3">
    <citation type="journal article" date="2006" name="Mol. Syst. Biol.">
        <title>Highly accurate genome sequences of Escherichia coli K-12 strains MG1655 and W3110.</title>
        <authorList>
            <person name="Hayashi K."/>
            <person name="Morooka N."/>
            <person name="Yamamoto Y."/>
            <person name="Fujita K."/>
            <person name="Isono K."/>
            <person name="Choi S."/>
            <person name="Ohtsubo E."/>
            <person name="Baba T."/>
            <person name="Wanner B.L."/>
            <person name="Mori H."/>
            <person name="Horiuchi T."/>
        </authorList>
    </citation>
    <scope>NUCLEOTIDE SEQUENCE [LARGE SCALE GENOMIC DNA]</scope>
    <source>
        <strain>K12 / W3110 / ATCC 27325 / DSM 5911</strain>
    </source>
</reference>
<reference key="4">
    <citation type="journal article" date="1996" name="Microbiology">
        <title>The purB gene of Escherichia coli K-12 is located in an operon.</title>
        <authorList>
            <person name="Green S.M."/>
            <person name="Malik T."/>
            <person name="Giles I.G."/>
            <person name="Drabble W.T."/>
        </authorList>
    </citation>
    <scope>NUCLEOTIDE SEQUENCE [GENOMIC DNA] OF 138-368</scope>
    <source>
        <strain>K12</strain>
    </source>
</reference>
<reference key="5">
    <citation type="journal article" date="1992" name="J. Bacteriol.">
        <title>Escherichia coli purB gene: cloning, nucleotide sequence, and regulation by purR.</title>
        <authorList>
            <person name="He B."/>
            <person name="Smith J.M."/>
            <person name="Zalkin H."/>
        </authorList>
    </citation>
    <scope>NUCLEOTIDE SEQUENCE [GENOMIC DNA] OF 254-368</scope>
    <source>
        <strain>K12</strain>
    </source>
</reference>
<reference key="6">
    <citation type="journal article" date="1985" name="J. Bacteriol.">
        <title>Antisuppressor mutation in Escherichia coli defective in biosynthesis of 5-methylaminomethyl-2-thiouridine.</title>
        <authorList>
            <person name="Sullivan M.A."/>
            <person name="Cannon J.F."/>
            <person name="Webb F.H."/>
            <person name="Bock R.M."/>
        </authorList>
    </citation>
    <scope>MUTANT STUDIES</scope>
    <source>
        <strain>K12</strain>
    </source>
</reference>
<reference key="7">
    <citation type="journal article" date="2003" name="Biochemistry">
        <title>MnmA and IscS are required for in vitro 2-thiouridine biosynthesis in Escherichia coli.</title>
        <authorList>
            <person name="Kambampati R."/>
            <person name="Lauhon C.T."/>
        </authorList>
    </citation>
    <scope>FUNCTION</scope>
    <scope>CATALYTIC ACTIVITY</scope>
    <scope>ATP-BINDING</scope>
    <scope>TRNA-BINDING</scope>
    <source>
        <strain>K12 / MC1061 / ATCC 53338 / DSM 7140</strain>
    </source>
</reference>
<reference key="8">
    <citation type="journal article" date="2006" name="Mol. Cell">
        <title>Mechanistic insights into sulfur relay by multiple sulfur mediators involved in thiouridine biosynthesis at tRNA wobble positions.</title>
        <authorList>
            <person name="Ikeuchi Y."/>
            <person name="Shigi N."/>
            <person name="Kato J."/>
            <person name="Nishimura A."/>
            <person name="Suzuki T."/>
        </authorList>
    </citation>
    <scope>CATALYTIC ACTIVITY</scope>
    <scope>INTERACTION WITH TUSE</scope>
</reference>
<reference key="9">
    <citation type="journal article" date="2006" name="Acta Crystallogr. F">
        <title>Crystallization and preliminary X-ray analysis of the tRNA thiolation enzyme MnmA from Escherichia coli complexed with tRNA(Glu).</title>
        <authorList>
            <person name="Numata T."/>
            <person name="Ikeuchi Y."/>
            <person name="Fukai S."/>
            <person name="Adachi H."/>
            <person name="Matsumura H."/>
            <person name="Takano K."/>
            <person name="Murakami S."/>
            <person name="Inoue T."/>
            <person name="Mori Y."/>
            <person name="Sasaki T."/>
            <person name="Suzuki T."/>
            <person name="Nureki O."/>
        </authorList>
    </citation>
    <scope>CRYSTALLIZATION</scope>
</reference>
<reference key="10">
    <citation type="journal article" date="2006" name="Nature">
        <title>Snapshots of tRNA sulphuration via an adenylated intermediate.</title>
        <authorList>
            <person name="Numata T."/>
            <person name="Ikeuchi Y."/>
            <person name="Fukai S."/>
            <person name="Suzuki T."/>
            <person name="Nureki O."/>
        </authorList>
    </citation>
    <scope>X-RAY CRYSTALLOGRAPHY (3.1 ANGSTROMS) IN COMPLEXES WITH AMP AND TRNA</scope>
    <scope>ACTIVE SITE</scope>
    <scope>DISULFIDE BOND</scope>
    <scope>MUTAGENESIS OF ASP-17; MET-37; ASN-97; ASP-99; CYS-102; LYS-107; HIS-128; LYS-149; GLN-151; CYS-199; PHE-200; THR-239; ARG-311 AND GLN-344</scope>
</reference>
<sequence length="368" mass="40959">MSETAKKVIVGMSGGVDSSVSAWLLQQQGYQVEGLFMKNWEEDDGEEYCTAAADLADAQAVCDKLGIELHTVNFAAEYWDNVFELFLAEYKAGRTPNPDILCNKEIKFKAFLEFAAEDLGADYIATGHYVRRADVDGKSRLLRGLDSNKDQSYFLYTLSHEQIAQSLFPVGELEKPQVRKIAEDLGLVTAKKKDSTGICFIGERKFREFLGRYLPAQPGKIITVDGDEIGEHQGLMYHTLGQRKGLGIGGTKEGTEEPWYVVDKDVENNILVVAQGHEHPRLMSVGLIAQQLHWVDREPFTGTMRCTVKTRYRQTDIPCTVKALDDDRIEVIFDEPVAAVTPGQSAVFYNGEVCLGGGIIEQRLPLPV</sequence>
<evidence type="ECO:0000269" key="1">
    <source>
    </source>
</evidence>
<evidence type="ECO:0000269" key="2">
    <source>
    </source>
</evidence>
<evidence type="ECO:0000269" key="3">
    <source>
    </source>
</evidence>
<evidence type="ECO:0000305" key="4"/>
<evidence type="ECO:0007829" key="5">
    <source>
        <dbReference type="PDB" id="2DER"/>
    </source>
</evidence>
<evidence type="ECO:0007829" key="6">
    <source>
        <dbReference type="PDB" id="2DEU"/>
    </source>
</evidence>
<comment type="function">
    <text evidence="1">Catalyzes the 2-thiolation of uridine at the wobble position (U34) of tRNA(Lys), tRNA(Glu) and tRNA(Gln), leading to the formation of s(2)U34, the first step of tRNA-mnm(5)s(2)U34 synthesis. Sulfur is provided by IscS, via a sulfur-relay system. Binds ATP and its substrate tRNAs.</text>
</comment>
<comment type="catalytic activity">
    <reaction evidence="1 2">
        <text>S-sulfanyl-L-cysteinyl-[protein] + uridine(34) in tRNA + AH2 + ATP = 2-thiouridine(34) in tRNA + L-cysteinyl-[protein] + A + AMP + diphosphate + H(+)</text>
        <dbReference type="Rhea" id="RHEA:47032"/>
        <dbReference type="Rhea" id="RHEA-COMP:10131"/>
        <dbReference type="Rhea" id="RHEA-COMP:11726"/>
        <dbReference type="Rhea" id="RHEA-COMP:11727"/>
        <dbReference type="Rhea" id="RHEA-COMP:11728"/>
        <dbReference type="ChEBI" id="CHEBI:13193"/>
        <dbReference type="ChEBI" id="CHEBI:15378"/>
        <dbReference type="ChEBI" id="CHEBI:17499"/>
        <dbReference type="ChEBI" id="CHEBI:29950"/>
        <dbReference type="ChEBI" id="CHEBI:30616"/>
        <dbReference type="ChEBI" id="CHEBI:33019"/>
        <dbReference type="ChEBI" id="CHEBI:61963"/>
        <dbReference type="ChEBI" id="CHEBI:65315"/>
        <dbReference type="ChEBI" id="CHEBI:87170"/>
        <dbReference type="ChEBI" id="CHEBI:456215"/>
        <dbReference type="EC" id="2.8.1.13"/>
    </reaction>
</comment>
<comment type="subunit">
    <text evidence="2">Interacts with TusE.</text>
</comment>
<comment type="subcellular location">
    <subcellularLocation>
        <location>Cytoplasm</location>
    </subcellularLocation>
</comment>
<comment type="miscellaneous">
    <text>During the reaction, ATP is used to activate the C2 atom of U34 by adenylation. After this, the persulfide sulfur on the catalytic cysteine is transferred to the C2 atom of U34. The reaction probably involves hydrogen sulfide that is generated from the persulfide intermediate and that acts as a nucleophile towards the activated C2 atom on U34. Subsequently, Cys-102 acts as a nucleophile towards Cys-199, and a transient disulfide bond is formed.</text>
</comment>
<comment type="similarity">
    <text evidence="4">Belongs to the MnmA/TRMU family.</text>
</comment>
<comment type="caution">
    <text evidence="4">Was originally thought to be a 5-methylaminomethyl-2-methyltransferase involved in tRNA modification.</text>
</comment>
<comment type="sequence caution" evidence="4">
    <conflict type="frameshift">
        <sequence resource="EMBL-CDS" id="CAA41994"/>
    </conflict>
</comment>
<keyword id="KW-0002">3D-structure</keyword>
<keyword id="KW-0067">ATP-binding</keyword>
<keyword id="KW-0963">Cytoplasm</keyword>
<keyword id="KW-1015">Disulfide bond</keyword>
<keyword id="KW-0547">Nucleotide-binding</keyword>
<keyword id="KW-1185">Reference proteome</keyword>
<keyword id="KW-0694">RNA-binding</keyword>
<keyword id="KW-0808">Transferase</keyword>
<keyword id="KW-0819">tRNA processing</keyword>
<keyword id="KW-0820">tRNA-binding</keyword>
<organism>
    <name type="scientific">Escherichia coli (strain K12)</name>
    <dbReference type="NCBI Taxonomy" id="83333"/>
    <lineage>
        <taxon>Bacteria</taxon>
        <taxon>Pseudomonadati</taxon>
        <taxon>Pseudomonadota</taxon>
        <taxon>Gammaproteobacteria</taxon>
        <taxon>Enterobacterales</taxon>
        <taxon>Enterobacteriaceae</taxon>
        <taxon>Escherichia</taxon>
    </lineage>
</organism>
<name>MNMA_ECOLI</name>
<protein>
    <recommendedName>
        <fullName>tRNA-specific 2-thiouridylase MnmA</fullName>
        <ecNumber evidence="1 2">2.8.1.13</ecNumber>
    </recommendedName>
</protein>
<proteinExistence type="evidence at protein level"/>